<gene>
    <name type="primary">SMIM23</name>
    <name type="synonym">C5orf50</name>
</gene>
<dbReference type="EMBL" id="AC011410">
    <property type="status" value="NOT_ANNOTATED_CDS"/>
    <property type="molecule type" value="Genomic_DNA"/>
</dbReference>
<dbReference type="EMBL" id="DN930602">
    <property type="status" value="NOT_ANNOTATED_CDS"/>
    <property type="molecule type" value="mRNA"/>
</dbReference>
<dbReference type="EMBL" id="EG327839">
    <property type="status" value="NOT_ANNOTATED_CDS"/>
    <property type="molecule type" value="mRNA"/>
</dbReference>
<dbReference type="CCDS" id="CCDS87347.1"/>
<dbReference type="RefSeq" id="NP_001276899.1">
    <property type="nucleotide sequence ID" value="NM_001289970.2"/>
</dbReference>
<dbReference type="SMR" id="A6NLE4"/>
<dbReference type="STRING" id="9606.ENSP00000430818"/>
<dbReference type="BioMuta" id="SMIM23"/>
<dbReference type="PaxDb" id="9606-ENSP00000331214"/>
<dbReference type="ProteomicsDB" id="1469"/>
<dbReference type="Antibodypedia" id="64430">
    <property type="antibodies" value="3 antibodies from 3 providers"/>
</dbReference>
<dbReference type="DNASU" id="644994"/>
<dbReference type="Ensembl" id="ENST00000523047.4">
    <property type="protein sequence ID" value="ENSP00000430818.4"/>
    <property type="gene ID" value="ENSG00000185662.11"/>
</dbReference>
<dbReference type="Ensembl" id="ENST00000639838.1">
    <property type="protein sequence ID" value="ENSP00000490990.1"/>
    <property type="gene ID" value="ENSG00000185662.11"/>
</dbReference>
<dbReference type="GeneID" id="644994"/>
<dbReference type="KEGG" id="hsa:644994"/>
<dbReference type="MANE-Select" id="ENST00000523047.4">
    <property type="protein sequence ID" value="ENSP00000430818.4"/>
    <property type="RefSeq nucleotide sequence ID" value="NM_001289970.2"/>
    <property type="RefSeq protein sequence ID" value="NP_001276899.1"/>
</dbReference>
<dbReference type="UCSC" id="uc063jql.1">
    <property type="organism name" value="human"/>
</dbReference>
<dbReference type="AGR" id="HGNC:34440"/>
<dbReference type="CTD" id="644994"/>
<dbReference type="GeneCards" id="SMIM23"/>
<dbReference type="HGNC" id="HGNC:34440">
    <property type="gene designation" value="SMIM23"/>
</dbReference>
<dbReference type="HPA" id="ENSG00000185662">
    <property type="expression patterns" value="Tissue enriched (testis)"/>
</dbReference>
<dbReference type="neXtProt" id="NX_A6NLE4"/>
<dbReference type="OpenTargets" id="ENSG00000185662"/>
<dbReference type="VEuPathDB" id="HostDB:ENSG00000185662"/>
<dbReference type="eggNOG" id="ENOG502TDUM">
    <property type="taxonomic scope" value="Eukaryota"/>
</dbReference>
<dbReference type="GeneTree" id="ENSGT00390000017300"/>
<dbReference type="InParanoid" id="A6NLE4"/>
<dbReference type="OMA" id="GSRCEDK"/>
<dbReference type="OrthoDB" id="9450349at2759"/>
<dbReference type="PAN-GO" id="A6NLE4">
    <property type="GO annotations" value="0 GO annotations based on evolutionary models"/>
</dbReference>
<dbReference type="TreeFam" id="TF338699"/>
<dbReference type="PathwayCommons" id="A6NLE4"/>
<dbReference type="SignaLink" id="A6NLE4"/>
<dbReference type="BioGRID-ORCS" id="644994">
    <property type="hits" value="1 hit in 191 CRISPR screens"/>
</dbReference>
<dbReference type="GenomeRNAi" id="644994"/>
<dbReference type="Pharos" id="A6NLE4">
    <property type="development level" value="Tdark"/>
</dbReference>
<dbReference type="PRO" id="PR:A6NLE4"/>
<dbReference type="Proteomes" id="UP000005640">
    <property type="component" value="Chromosome 5"/>
</dbReference>
<dbReference type="RNAct" id="A6NLE4">
    <property type="molecule type" value="protein"/>
</dbReference>
<dbReference type="Bgee" id="ENSG00000185662">
    <property type="expression patterns" value="Expressed in male germ line stem cell (sensu Vertebrata) in testis and 45 other cell types or tissues"/>
</dbReference>
<dbReference type="ExpressionAtlas" id="A6NLE4">
    <property type="expression patterns" value="baseline and differential"/>
</dbReference>
<dbReference type="GO" id="GO:0005886">
    <property type="term" value="C:plasma membrane"/>
    <property type="evidence" value="ECO:0007669"/>
    <property type="project" value="UniProtKB-SubCell"/>
</dbReference>
<dbReference type="InterPro" id="IPR027880">
    <property type="entry name" value="DUF4635"/>
</dbReference>
<dbReference type="PANTHER" id="PTHR37865">
    <property type="entry name" value="SMALL INTEGRAL MEMBRANE PROTEIN 23"/>
    <property type="match status" value="1"/>
</dbReference>
<dbReference type="PANTHER" id="PTHR37865:SF1">
    <property type="entry name" value="SMALL INTEGRAL MEMBRANE PROTEIN 23"/>
    <property type="match status" value="1"/>
</dbReference>
<dbReference type="Pfam" id="PF15466">
    <property type="entry name" value="DUF4635"/>
    <property type="match status" value="1"/>
</dbReference>
<organism>
    <name type="scientific">Homo sapiens</name>
    <name type="common">Human</name>
    <dbReference type="NCBI Taxonomy" id="9606"/>
    <lineage>
        <taxon>Eukaryota</taxon>
        <taxon>Metazoa</taxon>
        <taxon>Chordata</taxon>
        <taxon>Craniata</taxon>
        <taxon>Vertebrata</taxon>
        <taxon>Euteleostomi</taxon>
        <taxon>Mammalia</taxon>
        <taxon>Eutheria</taxon>
        <taxon>Euarchontoglires</taxon>
        <taxon>Primates</taxon>
        <taxon>Haplorrhini</taxon>
        <taxon>Catarrhini</taxon>
        <taxon>Hominidae</taxon>
        <taxon>Homo</taxon>
    </lineage>
</organism>
<reference key="1">
    <citation type="journal article" date="2004" name="Nature">
        <title>The DNA sequence and comparative analysis of human chromosome 5.</title>
        <authorList>
            <person name="Schmutz J."/>
            <person name="Martin J."/>
            <person name="Terry A."/>
            <person name="Couronne O."/>
            <person name="Grimwood J."/>
            <person name="Lowry S."/>
            <person name="Gordon L.A."/>
            <person name="Scott D."/>
            <person name="Xie G."/>
            <person name="Huang W."/>
            <person name="Hellsten U."/>
            <person name="Tran-Gyamfi M."/>
            <person name="She X."/>
            <person name="Prabhakar S."/>
            <person name="Aerts A."/>
            <person name="Altherr M."/>
            <person name="Bajorek E."/>
            <person name="Black S."/>
            <person name="Branscomb E."/>
            <person name="Caoile C."/>
            <person name="Challacombe J.F."/>
            <person name="Chan Y.M."/>
            <person name="Denys M."/>
            <person name="Detter J.C."/>
            <person name="Escobar J."/>
            <person name="Flowers D."/>
            <person name="Fotopulos D."/>
            <person name="Glavina T."/>
            <person name="Gomez M."/>
            <person name="Gonzales E."/>
            <person name="Goodstein D."/>
            <person name="Grigoriev I."/>
            <person name="Groza M."/>
            <person name="Hammon N."/>
            <person name="Hawkins T."/>
            <person name="Haydu L."/>
            <person name="Israni S."/>
            <person name="Jett J."/>
            <person name="Kadner K."/>
            <person name="Kimball H."/>
            <person name="Kobayashi A."/>
            <person name="Lopez F."/>
            <person name="Lou Y."/>
            <person name="Martinez D."/>
            <person name="Medina C."/>
            <person name="Morgan J."/>
            <person name="Nandkeshwar R."/>
            <person name="Noonan J.P."/>
            <person name="Pitluck S."/>
            <person name="Pollard M."/>
            <person name="Predki P."/>
            <person name="Priest J."/>
            <person name="Ramirez L."/>
            <person name="Retterer J."/>
            <person name="Rodriguez A."/>
            <person name="Rogers S."/>
            <person name="Salamov A."/>
            <person name="Salazar A."/>
            <person name="Thayer N."/>
            <person name="Tice H."/>
            <person name="Tsai M."/>
            <person name="Ustaszewska A."/>
            <person name="Vo N."/>
            <person name="Wheeler J."/>
            <person name="Wu K."/>
            <person name="Yang J."/>
            <person name="Dickson M."/>
            <person name="Cheng J.-F."/>
            <person name="Eichler E.E."/>
            <person name="Olsen A."/>
            <person name="Pennacchio L.A."/>
            <person name="Rokhsar D.S."/>
            <person name="Richardson P."/>
            <person name="Lucas S.M."/>
            <person name="Myers R.M."/>
            <person name="Rubin E.M."/>
        </authorList>
    </citation>
    <scope>NUCLEOTIDE SEQUENCE [LARGE SCALE GENOMIC DNA]</scope>
</reference>
<reference key="2">
    <citation type="submission" date="2006-10" db="UniProtKB">
        <title>Exhaustive RT-PCR and sequencing of all novel TWINSCAN predictions in human.</title>
        <authorList>
            <person name="Stevens M."/>
            <person name="Wei C."/>
            <person name="Gross S.S."/>
            <person name="McPherson J."/>
            <person name="Brent M.R."/>
        </authorList>
    </citation>
    <scope>NUCLEOTIDE SEQUENCE [LARGE SCALE MRNA] OF 11-124</scope>
</reference>
<sequence>MATQQVDSRRQVAAEQVAAQLLERRRGSHCDDEKQTLLALLILVLYLSTEIWGSSWEVSERIRECNYYQNLAVPQGLEYQTNEPSEEPIKTIRNWLKEKLHVFSEKLEEEVQQLEQLAWDLELWLDALLGEPHQEEHCSTYKSHLWEWAWALGREHKGGEGLLEISLSGAEL</sequence>
<keyword id="KW-1003">Cell membrane</keyword>
<keyword id="KW-0175">Coiled coil</keyword>
<keyword id="KW-0472">Membrane</keyword>
<keyword id="KW-1185">Reference proteome</keyword>
<keyword id="KW-0735">Signal-anchor</keyword>
<keyword id="KW-0812">Transmembrane</keyword>
<keyword id="KW-1133">Transmembrane helix</keyword>
<name>SIM23_HUMAN</name>
<accession>A6NLE4</accession>
<feature type="chain" id="PRO_0000341237" description="Small integral membrane protein 23">
    <location>
        <begin position="1"/>
        <end position="172"/>
    </location>
</feature>
<feature type="topological domain" description="Cytoplasmic" evidence="1">
    <location>
        <begin position="1"/>
        <end position="36"/>
    </location>
</feature>
<feature type="transmembrane region" description="Helical; Signal-anchor for type II membrane protein" evidence="1">
    <location>
        <begin position="37"/>
        <end position="53"/>
    </location>
</feature>
<feature type="topological domain" description="Extracellular" evidence="1">
    <location>
        <begin position="54"/>
        <end position="172"/>
    </location>
</feature>
<feature type="coiled-coil region" evidence="1">
    <location>
        <begin position="96"/>
        <end position="128"/>
    </location>
</feature>
<feature type="sequence variant" id="VAR_057736" description="In dbSNP:rs10037031.">
    <original>T</original>
    <variation>M</variation>
    <location>
        <position position="36"/>
    </location>
</feature>
<comment type="subcellular location">
    <subcellularLocation>
        <location evidence="2">Cell membrane</location>
        <topology evidence="2">Single-pass type II membrane protein</topology>
    </subcellularLocation>
</comment>
<proteinExistence type="evidence at transcript level"/>
<evidence type="ECO:0000255" key="1"/>
<evidence type="ECO:0000305" key="2"/>
<protein>
    <recommendedName>
        <fullName>Small integral membrane protein 23</fullName>
    </recommendedName>
</protein>